<evidence type="ECO:0000255" key="1">
    <source>
        <dbReference type="HAMAP-Rule" id="MF_01365"/>
    </source>
</evidence>
<evidence type="ECO:0000305" key="2"/>
<comment type="function">
    <text evidence="1">This protein binds to the 23S rRNA, and is important in its secondary structure. It is located near the subunit interface in the base of the L7/L12 stalk, and near the tRNA binding site of the peptidyltransferase center.</text>
</comment>
<comment type="subunit">
    <text evidence="1">Part of the 50S ribosomal subunit.</text>
</comment>
<comment type="similarity">
    <text evidence="1">Belongs to the universal ribosomal protein uL6 family.</text>
</comment>
<protein>
    <recommendedName>
        <fullName evidence="1">Large ribosomal subunit protein uL6</fullName>
    </recommendedName>
    <alternativeName>
        <fullName evidence="2">50S ribosomal protein L6</fullName>
    </alternativeName>
</protein>
<proteinExistence type="inferred from homology"/>
<dbReference type="EMBL" id="CP000124">
    <property type="protein sequence ID" value="ABA49814.1"/>
    <property type="molecule type" value="Genomic_DNA"/>
</dbReference>
<dbReference type="RefSeq" id="WP_004197947.1">
    <property type="nucleotide sequence ID" value="NC_007434.1"/>
</dbReference>
<dbReference type="SMR" id="Q3JMS8"/>
<dbReference type="EnsemblBacteria" id="ABA49814">
    <property type="protein sequence ID" value="ABA49814"/>
    <property type="gene ID" value="BURPS1710b_3761"/>
</dbReference>
<dbReference type="GeneID" id="93061817"/>
<dbReference type="KEGG" id="bpm:BURPS1710b_3761"/>
<dbReference type="HOGENOM" id="CLU_065464_1_2_4"/>
<dbReference type="Proteomes" id="UP000002700">
    <property type="component" value="Chromosome I"/>
</dbReference>
<dbReference type="GO" id="GO:0022625">
    <property type="term" value="C:cytosolic large ribosomal subunit"/>
    <property type="evidence" value="ECO:0007669"/>
    <property type="project" value="TreeGrafter"/>
</dbReference>
<dbReference type="GO" id="GO:0019843">
    <property type="term" value="F:rRNA binding"/>
    <property type="evidence" value="ECO:0007669"/>
    <property type="project" value="UniProtKB-UniRule"/>
</dbReference>
<dbReference type="GO" id="GO:0003735">
    <property type="term" value="F:structural constituent of ribosome"/>
    <property type="evidence" value="ECO:0007669"/>
    <property type="project" value="InterPro"/>
</dbReference>
<dbReference type="GO" id="GO:0002181">
    <property type="term" value="P:cytoplasmic translation"/>
    <property type="evidence" value="ECO:0007669"/>
    <property type="project" value="TreeGrafter"/>
</dbReference>
<dbReference type="FunFam" id="3.90.930.12:FF:000001">
    <property type="entry name" value="50S ribosomal protein L6"/>
    <property type="match status" value="1"/>
</dbReference>
<dbReference type="Gene3D" id="3.90.930.12">
    <property type="entry name" value="Ribosomal protein L6, alpha-beta domain"/>
    <property type="match status" value="2"/>
</dbReference>
<dbReference type="HAMAP" id="MF_01365_B">
    <property type="entry name" value="Ribosomal_uL6_B"/>
    <property type="match status" value="1"/>
</dbReference>
<dbReference type="InterPro" id="IPR000702">
    <property type="entry name" value="Ribosomal_uL6-like"/>
</dbReference>
<dbReference type="InterPro" id="IPR036789">
    <property type="entry name" value="Ribosomal_uL6-like_a/b-dom_sf"/>
</dbReference>
<dbReference type="InterPro" id="IPR020040">
    <property type="entry name" value="Ribosomal_uL6_a/b-dom"/>
</dbReference>
<dbReference type="InterPro" id="IPR019906">
    <property type="entry name" value="Ribosomal_uL6_bac-type"/>
</dbReference>
<dbReference type="InterPro" id="IPR002358">
    <property type="entry name" value="Ribosomal_uL6_CS"/>
</dbReference>
<dbReference type="NCBIfam" id="TIGR03654">
    <property type="entry name" value="L6_bact"/>
    <property type="match status" value="1"/>
</dbReference>
<dbReference type="PANTHER" id="PTHR11655">
    <property type="entry name" value="60S/50S RIBOSOMAL PROTEIN L6/L9"/>
    <property type="match status" value="1"/>
</dbReference>
<dbReference type="PANTHER" id="PTHR11655:SF14">
    <property type="entry name" value="LARGE RIBOSOMAL SUBUNIT PROTEIN UL6M"/>
    <property type="match status" value="1"/>
</dbReference>
<dbReference type="Pfam" id="PF00347">
    <property type="entry name" value="Ribosomal_L6"/>
    <property type="match status" value="2"/>
</dbReference>
<dbReference type="PIRSF" id="PIRSF002162">
    <property type="entry name" value="Ribosomal_L6"/>
    <property type="match status" value="1"/>
</dbReference>
<dbReference type="PRINTS" id="PR00059">
    <property type="entry name" value="RIBOSOMALL6"/>
</dbReference>
<dbReference type="SUPFAM" id="SSF56053">
    <property type="entry name" value="Ribosomal protein L6"/>
    <property type="match status" value="2"/>
</dbReference>
<dbReference type="PROSITE" id="PS00525">
    <property type="entry name" value="RIBOSOMAL_L6_1"/>
    <property type="match status" value="1"/>
</dbReference>
<feature type="chain" id="PRO_0000265233" description="Large ribosomal subunit protein uL6">
    <location>
        <begin position="1"/>
        <end position="176"/>
    </location>
</feature>
<sequence>MSRVGKSPIALQGAEVKLADGAITVKGPLGTITQAVNPLVNVANNDGTLNLSPVDDSREANALSGTMRAIIANAVHGVTKGFERKLTLVGVGYRAQAQGDKLNLSLGFSHPVVHQMPEGIKAETPTQTEIVIKGIDKQKVGQVAAEVRGYRPPEPYKGKGVRYADEVVILKETKKK</sequence>
<reference key="1">
    <citation type="journal article" date="2010" name="Genome Biol. Evol.">
        <title>Continuing evolution of Burkholderia mallei through genome reduction and large-scale rearrangements.</title>
        <authorList>
            <person name="Losada L."/>
            <person name="Ronning C.M."/>
            <person name="DeShazer D."/>
            <person name="Woods D."/>
            <person name="Fedorova N."/>
            <person name="Kim H.S."/>
            <person name="Shabalina S.A."/>
            <person name="Pearson T.R."/>
            <person name="Brinkac L."/>
            <person name="Tan P."/>
            <person name="Nandi T."/>
            <person name="Crabtree J."/>
            <person name="Badger J."/>
            <person name="Beckstrom-Sternberg S."/>
            <person name="Saqib M."/>
            <person name="Schutzer S.E."/>
            <person name="Keim P."/>
            <person name="Nierman W.C."/>
        </authorList>
    </citation>
    <scope>NUCLEOTIDE SEQUENCE [LARGE SCALE GENOMIC DNA]</scope>
    <source>
        <strain>1710b</strain>
    </source>
</reference>
<name>RL6_BURP1</name>
<organism>
    <name type="scientific">Burkholderia pseudomallei (strain 1710b)</name>
    <dbReference type="NCBI Taxonomy" id="320372"/>
    <lineage>
        <taxon>Bacteria</taxon>
        <taxon>Pseudomonadati</taxon>
        <taxon>Pseudomonadota</taxon>
        <taxon>Betaproteobacteria</taxon>
        <taxon>Burkholderiales</taxon>
        <taxon>Burkholderiaceae</taxon>
        <taxon>Burkholderia</taxon>
        <taxon>pseudomallei group</taxon>
    </lineage>
</organism>
<gene>
    <name evidence="1" type="primary">rplF</name>
    <name type="ordered locus">BURPS1710b_3761</name>
</gene>
<keyword id="KW-0687">Ribonucleoprotein</keyword>
<keyword id="KW-0689">Ribosomal protein</keyword>
<keyword id="KW-0694">RNA-binding</keyword>
<keyword id="KW-0699">rRNA-binding</keyword>
<accession>Q3JMS8</accession>